<keyword id="KW-0456">Lyase</keyword>
<keyword id="KW-0663">Pyridoxal phosphate</keyword>
<dbReference type="EC" id="4.4.1.15" evidence="1"/>
<dbReference type="EMBL" id="CP000826">
    <property type="protein sequence ID" value="ABV42038.1"/>
    <property type="molecule type" value="Genomic_DNA"/>
</dbReference>
<dbReference type="SMR" id="A8GFZ8"/>
<dbReference type="STRING" id="399741.Spro_2937"/>
<dbReference type="KEGG" id="spe:Spro_2937"/>
<dbReference type="eggNOG" id="COG2515">
    <property type="taxonomic scope" value="Bacteria"/>
</dbReference>
<dbReference type="HOGENOM" id="CLU_048897_1_0_6"/>
<dbReference type="OrthoDB" id="9801249at2"/>
<dbReference type="GO" id="GO:0019148">
    <property type="term" value="F:D-cysteine desulfhydrase activity"/>
    <property type="evidence" value="ECO:0007669"/>
    <property type="project" value="UniProtKB-UniRule"/>
</dbReference>
<dbReference type="GO" id="GO:0046416">
    <property type="term" value="P:D-amino acid metabolic process"/>
    <property type="evidence" value="ECO:0007669"/>
    <property type="project" value="UniProtKB-UniRule"/>
</dbReference>
<dbReference type="CDD" id="cd06449">
    <property type="entry name" value="ACCD"/>
    <property type="match status" value="1"/>
</dbReference>
<dbReference type="FunFam" id="3.40.50.1100:FF:000017">
    <property type="entry name" value="D-cysteine desulfhydrase"/>
    <property type="match status" value="1"/>
</dbReference>
<dbReference type="Gene3D" id="3.40.50.1100">
    <property type="match status" value="2"/>
</dbReference>
<dbReference type="HAMAP" id="MF_01045">
    <property type="entry name" value="D_Cys_desulfhydr"/>
    <property type="match status" value="1"/>
</dbReference>
<dbReference type="InterPro" id="IPR027278">
    <property type="entry name" value="ACCD_DCysDesulf"/>
</dbReference>
<dbReference type="InterPro" id="IPR005966">
    <property type="entry name" value="D-Cys_desShydrase"/>
</dbReference>
<dbReference type="InterPro" id="IPR023702">
    <property type="entry name" value="D_Cys_desulphydr_bac"/>
</dbReference>
<dbReference type="InterPro" id="IPR001926">
    <property type="entry name" value="TrpB-like_PALP"/>
</dbReference>
<dbReference type="InterPro" id="IPR036052">
    <property type="entry name" value="TrpB-like_PALP_sf"/>
</dbReference>
<dbReference type="NCBIfam" id="TIGR01275">
    <property type="entry name" value="ACC_deam_rel"/>
    <property type="match status" value="1"/>
</dbReference>
<dbReference type="NCBIfam" id="NF003030">
    <property type="entry name" value="PRK03910.1-3"/>
    <property type="match status" value="1"/>
</dbReference>
<dbReference type="NCBIfam" id="NF003032">
    <property type="entry name" value="PRK03910.1-5"/>
    <property type="match status" value="1"/>
</dbReference>
<dbReference type="PANTHER" id="PTHR43780">
    <property type="entry name" value="1-AMINOCYCLOPROPANE-1-CARBOXYLATE DEAMINASE-RELATED"/>
    <property type="match status" value="1"/>
</dbReference>
<dbReference type="PANTHER" id="PTHR43780:SF2">
    <property type="entry name" value="1-AMINOCYCLOPROPANE-1-CARBOXYLATE DEAMINASE-RELATED"/>
    <property type="match status" value="1"/>
</dbReference>
<dbReference type="Pfam" id="PF00291">
    <property type="entry name" value="PALP"/>
    <property type="match status" value="1"/>
</dbReference>
<dbReference type="PIRSF" id="PIRSF006278">
    <property type="entry name" value="ACCD_DCysDesulf"/>
    <property type="match status" value="1"/>
</dbReference>
<dbReference type="SUPFAM" id="SSF53686">
    <property type="entry name" value="Tryptophan synthase beta subunit-like PLP-dependent enzymes"/>
    <property type="match status" value="1"/>
</dbReference>
<proteinExistence type="inferred from homology"/>
<feature type="chain" id="PRO_1000064266" description="D-cysteine desulfhydrase">
    <location>
        <begin position="1"/>
        <end position="330"/>
    </location>
</feature>
<feature type="modified residue" description="N6-(pyridoxal phosphate)lysine" evidence="1">
    <location>
        <position position="52"/>
    </location>
</feature>
<sequence>MNLQQKLAQFPRLDLVGSATPLEKLSRLSDYLGREIYIKRDDVTPMAMGGNKLRKLEFLAADALRQGADTLVTAGAIQSNHVRQTAAVAAKLGLHCVALLENPIDTQEENYLTNGNRLLLGLFNAQVEMCEALHDPQQQLADLATRLEAQGFRPYVVPVGGSNALGALGYVQCALEIAEQSQRSNVAFSSVVVASGSAGTHAGLAVGLQQLLPETELVGVTVSRKVIDQLPKVEQIQKALANSLAIDELAPITLWDDYFAPQYGMPNEEGLAAIQLLAQQEGVLLDPVYSGKAMAGLIDGVAQQRFRDDGPILFIHTGGAPALFAYHPQV</sequence>
<accession>A8GFZ8</accession>
<name>DCYD_SERP5</name>
<protein>
    <recommendedName>
        <fullName evidence="1">D-cysteine desulfhydrase</fullName>
        <ecNumber evidence="1">4.4.1.15</ecNumber>
    </recommendedName>
</protein>
<reference key="1">
    <citation type="submission" date="2007-09" db="EMBL/GenBank/DDBJ databases">
        <title>Complete sequence of chromosome of Serratia proteamaculans 568.</title>
        <authorList>
            <consortium name="US DOE Joint Genome Institute"/>
            <person name="Copeland A."/>
            <person name="Lucas S."/>
            <person name="Lapidus A."/>
            <person name="Barry K."/>
            <person name="Glavina del Rio T."/>
            <person name="Dalin E."/>
            <person name="Tice H."/>
            <person name="Pitluck S."/>
            <person name="Chain P."/>
            <person name="Malfatti S."/>
            <person name="Shin M."/>
            <person name="Vergez L."/>
            <person name="Schmutz J."/>
            <person name="Larimer F."/>
            <person name="Land M."/>
            <person name="Hauser L."/>
            <person name="Kyrpides N."/>
            <person name="Kim E."/>
            <person name="Taghavi S."/>
            <person name="Newman L."/>
            <person name="Vangronsveld J."/>
            <person name="van der Lelie D."/>
            <person name="Richardson P."/>
        </authorList>
    </citation>
    <scope>NUCLEOTIDE SEQUENCE [LARGE SCALE GENOMIC DNA]</scope>
    <source>
        <strain>568</strain>
    </source>
</reference>
<organism>
    <name type="scientific">Serratia proteamaculans (strain 568)</name>
    <dbReference type="NCBI Taxonomy" id="399741"/>
    <lineage>
        <taxon>Bacteria</taxon>
        <taxon>Pseudomonadati</taxon>
        <taxon>Pseudomonadota</taxon>
        <taxon>Gammaproteobacteria</taxon>
        <taxon>Enterobacterales</taxon>
        <taxon>Yersiniaceae</taxon>
        <taxon>Serratia</taxon>
    </lineage>
</organism>
<evidence type="ECO:0000255" key="1">
    <source>
        <dbReference type="HAMAP-Rule" id="MF_01045"/>
    </source>
</evidence>
<comment type="function">
    <text evidence="1">Catalyzes the alpha,beta-elimination reaction of D-cysteine and of several D-cysteine derivatives. It could be a defense mechanism against D-cysteine.</text>
</comment>
<comment type="catalytic activity">
    <reaction evidence="1">
        <text>D-cysteine + H2O = hydrogen sulfide + pyruvate + NH4(+) + H(+)</text>
        <dbReference type="Rhea" id="RHEA:11268"/>
        <dbReference type="ChEBI" id="CHEBI:15361"/>
        <dbReference type="ChEBI" id="CHEBI:15377"/>
        <dbReference type="ChEBI" id="CHEBI:15378"/>
        <dbReference type="ChEBI" id="CHEBI:28938"/>
        <dbReference type="ChEBI" id="CHEBI:29919"/>
        <dbReference type="ChEBI" id="CHEBI:35236"/>
        <dbReference type="EC" id="4.4.1.15"/>
    </reaction>
</comment>
<comment type="cofactor">
    <cofactor evidence="1">
        <name>pyridoxal 5'-phosphate</name>
        <dbReference type="ChEBI" id="CHEBI:597326"/>
    </cofactor>
</comment>
<comment type="subunit">
    <text evidence="1">Homodimer.</text>
</comment>
<comment type="similarity">
    <text evidence="1">Belongs to the ACC deaminase/D-cysteine desulfhydrase family.</text>
</comment>
<gene>
    <name evidence="1" type="primary">dcyD</name>
    <name type="ordered locus">Spro_2937</name>
</gene>